<proteinExistence type="evidence at transcript level"/>
<keyword id="KW-0067">ATP-binding</keyword>
<keyword id="KW-0158">Chromosome</keyword>
<keyword id="KW-0238">DNA-binding</keyword>
<keyword id="KW-0469">Meiosis</keyword>
<keyword id="KW-0547">Nucleotide-binding</keyword>
<keyword id="KW-0539">Nucleus</keyword>
<keyword id="KW-1185">Reference proteome</keyword>
<accession>F4JEP5</accession>
<accession>A4URL6</accession>
<accession>Q56XI7</accession>
<accession>Q6NLQ0</accession>
<accession>Q9LTP4</accession>
<protein>
    <recommendedName>
        <fullName>DNA mismatch repair protein MSH5</fullName>
        <shortName>AtMSH5</shortName>
    </recommendedName>
    <alternativeName>
        <fullName>MutS protein homolog 5</fullName>
    </alternativeName>
</protein>
<gene>
    <name type="primary">MSH5</name>
    <name type="ordered locus">At3g20475</name>
    <name type="ORF">MQC12.27</name>
</gene>
<evidence type="ECO:0000255" key="1"/>
<evidence type="ECO:0000269" key="2">
    <source>
    </source>
</evidence>
<evidence type="ECO:0000269" key="3">
    <source>
    </source>
</evidence>
<evidence type="ECO:0000269" key="4">
    <source>
    </source>
</evidence>
<evidence type="ECO:0000269" key="5">
    <source>
    </source>
</evidence>
<evidence type="ECO:0000305" key="6"/>
<organism>
    <name type="scientific">Arabidopsis thaliana</name>
    <name type="common">Mouse-ear cress</name>
    <dbReference type="NCBI Taxonomy" id="3702"/>
    <lineage>
        <taxon>Eukaryota</taxon>
        <taxon>Viridiplantae</taxon>
        <taxon>Streptophyta</taxon>
        <taxon>Embryophyta</taxon>
        <taxon>Tracheophyta</taxon>
        <taxon>Spermatophyta</taxon>
        <taxon>Magnoliopsida</taxon>
        <taxon>eudicotyledons</taxon>
        <taxon>Gunneridae</taxon>
        <taxon>Pentapetalae</taxon>
        <taxon>rosids</taxon>
        <taxon>malvids</taxon>
        <taxon>Brassicales</taxon>
        <taxon>Brassicaceae</taxon>
        <taxon>Camelineae</taxon>
        <taxon>Arabidopsis</taxon>
    </lineage>
</organism>
<feature type="chain" id="PRO_0000418368" description="DNA mismatch repair protein MSH5">
    <location>
        <begin position="1"/>
        <end position="807"/>
    </location>
</feature>
<feature type="binding site" evidence="1">
    <location>
        <begin position="569"/>
        <end position="576"/>
    </location>
    <ligand>
        <name>ATP</name>
        <dbReference type="ChEBI" id="CHEBI:30616"/>
    </ligand>
</feature>
<feature type="sequence conflict" description="In Ref. 1; ABO69626." evidence="6" ref="1">
    <original>V</original>
    <variation>I</variation>
    <location>
        <position position="75"/>
    </location>
</feature>
<feature type="sequence conflict" description="In Ref. 5; AAS76767." evidence="6" ref="5">
    <original>G</original>
    <variation>D</variation>
    <location>
        <position position="658"/>
    </location>
</feature>
<sequence>MEEMEDTETEPQVYMACIQHGRRVGVSYYDCSVRQLHVLEFWEEDCSDFTLINMVKYQAKPSIIYASTKSEESFVAALQQNDGTDETTMVKLVKSSTFSYEQAWHRLVYLRVTGMDDGLNIKERICYLSSMMDVGSEVQVRVSGGLLAILESERIVETLEQNESGSASIAIDSVMEVPLNKFLKLDAAAHEALQIFQTDKHPSHMGIGRAKEGFSVFGMMNKCATPMGRRLLRSWFMRPILDLEVLDRRLNAISFFISSVELMASLRETLKSVKDISHLLKKFNSPTSLCTSNDWTAFLKSISALLHVNKIFEVGVSESLREHMRRFNLDIIEKAGLCISTELDYVYELVIGVIDVTRSKERGYQTLVKEGFCAELDELRQIYEELPEFLQEVSAMELEHFPHLHKEKLPPCIVYIQQIGYLMCIFGEKLDETALNRLTEFEFAFSDMDGETQRFFYHTSKTRELDNLLGDIYHKILDMERAIIRDLLSHTLLFSAHLLKAVNFVAELDCILSLACVAHQNNYVRPVLTVESLLDIRNGRHVLQEMAVDTFIPNDTEINDNGRIHIITGPNYSGKSIYVKQVALIVFLSHIGSFVPADAATVGLTDRIFCAMGSKFMTAEQSTFMIDLHQVGMMLRQATSRSLCLLDEFGKGTLTEDGIGLLGGTISHFATCAEPPRVVVCTHLTELLNESCLPVSEKIKFYTMSVLRPDTESANMEEIVFLYRLIPGQTLLSYGLHCALLAGVPEEVVKRAAIVLDAFESNNNVDKLSLDKISSQDQAFKDAVDKFAELDISKGDIHAFFQDIFTS</sequence>
<reference key="1">
    <citation type="journal article" date="2008" name="Plant J.">
        <title>AtMSH5 partners AtMSH4 in the class I meiotic crossover pathway in Arabidopsis thaliana, but is not required for synapsis.</title>
        <authorList>
            <person name="Higgins J.D."/>
            <person name="Vignard J."/>
            <person name="Mercier R."/>
            <person name="Pugh A.G."/>
            <person name="Franklin F.C."/>
            <person name="Jones G.H."/>
        </authorList>
    </citation>
    <scope>NUCLEOTIDE SEQUENCE [MRNA]</scope>
    <scope>FUNCTION</scope>
    <scope>SUBCELLULAR LOCATION</scope>
    <scope>TISSUE SPECIFICITY</scope>
    <scope>DISRUPTION PHENOTYPE</scope>
</reference>
<reference key="2">
    <citation type="journal article" date="2000" name="DNA Res.">
        <title>Structural analysis of Arabidopsis thaliana chromosome 3. I. Sequence features of the regions of 4,504,864 bp covered by sixty P1 and TAC clones.</title>
        <authorList>
            <person name="Sato S."/>
            <person name="Nakamura Y."/>
            <person name="Kaneko T."/>
            <person name="Katoh T."/>
            <person name="Asamizu E."/>
            <person name="Tabata S."/>
        </authorList>
    </citation>
    <scope>NUCLEOTIDE SEQUENCE [LARGE SCALE GENOMIC DNA]</scope>
    <source>
        <strain>cv. Columbia</strain>
    </source>
</reference>
<reference key="3">
    <citation type="journal article" date="2017" name="Plant J.">
        <title>Araport11: a complete reannotation of the Arabidopsis thaliana reference genome.</title>
        <authorList>
            <person name="Cheng C.Y."/>
            <person name="Krishnakumar V."/>
            <person name="Chan A.P."/>
            <person name="Thibaud-Nissen F."/>
            <person name="Schobel S."/>
            <person name="Town C.D."/>
        </authorList>
    </citation>
    <scope>GENOME REANNOTATION</scope>
    <source>
        <strain>cv. Columbia</strain>
    </source>
</reference>
<reference key="4">
    <citation type="submission" date="2006-07" db="EMBL/GenBank/DDBJ databases">
        <title>Large-scale analysis of RIKEN Arabidopsis full-length (RAFL) cDNAs.</title>
        <authorList>
            <person name="Totoki Y."/>
            <person name="Seki M."/>
            <person name="Ishida J."/>
            <person name="Nakajima M."/>
            <person name="Enju A."/>
            <person name="Kamiya A."/>
            <person name="Narusaka M."/>
            <person name="Shin-i T."/>
            <person name="Nakagawa M."/>
            <person name="Sakamoto N."/>
            <person name="Oishi K."/>
            <person name="Kohara Y."/>
            <person name="Kobayashi M."/>
            <person name="Toyoda A."/>
            <person name="Sakaki Y."/>
            <person name="Sakurai T."/>
            <person name="Iida K."/>
            <person name="Akiyama K."/>
            <person name="Satou M."/>
            <person name="Toyoda T."/>
            <person name="Konagaya A."/>
            <person name="Carninci P."/>
            <person name="Kawai J."/>
            <person name="Hayashizaki Y."/>
            <person name="Shinozaki K."/>
        </authorList>
    </citation>
    <scope>NUCLEOTIDE SEQUENCE [LARGE SCALE MRNA]</scope>
    <source>
        <strain>cv. Columbia</strain>
    </source>
</reference>
<reference key="5">
    <citation type="submission" date="2004-03" db="EMBL/GenBank/DDBJ databases">
        <title>Arabidopsis ORF clones.</title>
        <authorList>
            <person name="Cheuk R.F."/>
            <person name="Chen H."/>
            <person name="Kim C.J."/>
            <person name="Shinn P."/>
            <person name="Carninci P."/>
            <person name="Hayashizaki Y."/>
            <person name="Ishida J."/>
            <person name="Kamiya A."/>
            <person name="Kawai J."/>
            <person name="Narusaka M."/>
            <person name="Sakurai T."/>
            <person name="Satou M."/>
            <person name="Seki M."/>
            <person name="Shinozaki K."/>
            <person name="Ecker J.R."/>
        </authorList>
    </citation>
    <scope>NUCLEOTIDE SEQUENCE [LARGE SCALE MRNA] OF 448-807</scope>
    <source>
        <strain>cv. Columbia</strain>
    </source>
</reference>
<reference key="6">
    <citation type="journal article" date="2008" name="Cell Res.">
        <title>The Arabidopsis MutS homolog AtMSH5 is required for normal meiosis.</title>
        <authorList>
            <person name="Lu X."/>
            <person name="Liu X."/>
            <person name="An L."/>
            <person name="Zhang W."/>
            <person name="Sun J."/>
            <person name="Pei H."/>
            <person name="Meng H."/>
            <person name="Fan Y."/>
            <person name="Zhang C."/>
        </authorList>
    </citation>
    <scope>FUNCTION</scope>
    <scope>TISSUE SPECIFICITY</scope>
    <scope>DISRUPTION PHENOTYPE</scope>
</reference>
<reference key="7">
    <citation type="journal article" date="2008" name="Curr. Biol.">
        <title>SHOC1, an XPF endonuclease-related protein, is essential for the formation of class I meiotic crossovers.</title>
        <authorList>
            <person name="Macaisne N."/>
            <person name="Novatchkova M."/>
            <person name="Peirera L."/>
            <person name="Vezon D."/>
            <person name="Jolivet S."/>
            <person name="Froger N."/>
            <person name="Chelysheva L."/>
            <person name="Grelon M."/>
            <person name="Mercier R."/>
        </authorList>
    </citation>
    <scope>FUNCTION</scope>
    <scope>DISRUPTION PHENOTYPE</scope>
</reference>
<reference key="8">
    <citation type="journal article" date="2011" name="J. Cell Sci.">
        <title>SHOC1 and PTD form an XPF-ERCC1-like complex that is required for formation of class I crossovers.</title>
        <authorList>
            <person name="Macaisne N."/>
            <person name="Vignard J."/>
            <person name="Mercier R."/>
        </authorList>
    </citation>
    <scope>FUNCTION</scope>
    <scope>DISRUPTION PHENOTYPE</scope>
</reference>
<comment type="function">
    <text evidence="2 3 4 5">Involved in meiotic recombination in association with MSH4. Required for reciprocal recombination and proper segregation of homologous chromosomes at meiosis. Promotes homologous recombination through facilitating chiasma formation during prophase I. Involved in the control of class I crossovers formation.</text>
</comment>
<comment type="subcellular location">
    <subcellularLocation>
        <location evidence="2">Nucleus</location>
    </subcellularLocation>
    <subcellularLocation>
        <location evidence="2">Chromosome</location>
    </subcellularLocation>
    <text evidence="2">In pollen mother cells during meiosis, localizes to unsynapsed axes during leptotene and zygotene, but is not present on synapsed regions of zygotene nuclei.</text>
</comment>
<comment type="tissue specificity">
    <text evidence="2 3">Specifically expressed in flowers.</text>
</comment>
<comment type="disruption phenotype">
    <text evidence="2 3 4 5">Normal vegetative growth but severe reduction in fertility due to a decrease in chiasma frequency at metaphase I of meiosis.</text>
</comment>
<comment type="similarity">
    <text evidence="6">Belongs to the DNA mismatch repair MutS family.</text>
</comment>
<comment type="sequence caution" evidence="6">
    <conflict type="erroneous gene model prediction">
        <sequence resource="EMBL-CDS" id="BAB02831"/>
    </conflict>
</comment>
<comment type="sequence caution" evidence="6">
    <conflict type="frameshift">
        <sequence resource="EMBL-CDS" id="BAD95388"/>
    </conflict>
</comment>
<comment type="sequence caution" evidence="6">
    <conflict type="frameshift">
        <sequence resource="EMBL-CDS" id="BAF02028"/>
    </conflict>
</comment>
<name>MSH5_ARATH</name>
<dbReference type="EMBL" id="EF471448">
    <property type="protein sequence ID" value="ABO69626.1"/>
    <property type="molecule type" value="mRNA"/>
</dbReference>
<dbReference type="EMBL" id="AB024036">
    <property type="protein sequence ID" value="BAB02831.1"/>
    <property type="status" value="ALT_SEQ"/>
    <property type="molecule type" value="Genomic_DNA"/>
</dbReference>
<dbReference type="EMBL" id="CP002686">
    <property type="protein sequence ID" value="AEE76384.1"/>
    <property type="molecule type" value="Genomic_DNA"/>
</dbReference>
<dbReference type="EMBL" id="AK221687">
    <property type="protein sequence ID" value="BAD95388.1"/>
    <property type="status" value="ALT_FRAME"/>
    <property type="molecule type" value="mRNA"/>
</dbReference>
<dbReference type="EMBL" id="AK230222">
    <property type="protein sequence ID" value="BAF02028.1"/>
    <property type="status" value="ALT_FRAME"/>
    <property type="molecule type" value="mRNA"/>
</dbReference>
<dbReference type="EMBL" id="BT012280">
    <property type="protein sequence ID" value="AAS76767.1"/>
    <property type="molecule type" value="mRNA"/>
</dbReference>
<dbReference type="RefSeq" id="NP_188683.3">
    <property type="nucleotide sequence ID" value="NM_112939.4"/>
</dbReference>
<dbReference type="SMR" id="F4JEP5"/>
<dbReference type="FunCoup" id="F4JEP5">
    <property type="interactions" value="845"/>
</dbReference>
<dbReference type="STRING" id="3702.F4JEP5"/>
<dbReference type="PaxDb" id="3702-AT3G20475.1"/>
<dbReference type="ProteomicsDB" id="250876"/>
<dbReference type="EnsemblPlants" id="AT3G20475.1">
    <property type="protein sequence ID" value="AT3G20475.1"/>
    <property type="gene ID" value="AT3G20475"/>
</dbReference>
<dbReference type="GeneID" id="821593"/>
<dbReference type="Gramene" id="AT3G20475.1">
    <property type="protein sequence ID" value="AT3G20475.1"/>
    <property type="gene ID" value="AT3G20475"/>
</dbReference>
<dbReference type="KEGG" id="ath:AT3G20475"/>
<dbReference type="Araport" id="AT3G20475"/>
<dbReference type="TAIR" id="AT3G20475">
    <property type="gene designation" value="MSH5"/>
</dbReference>
<dbReference type="eggNOG" id="KOG0217">
    <property type="taxonomic scope" value="Eukaryota"/>
</dbReference>
<dbReference type="eggNOG" id="KOG0221">
    <property type="taxonomic scope" value="Eukaryota"/>
</dbReference>
<dbReference type="HOGENOM" id="CLU_002472_8_2_1"/>
<dbReference type="InParanoid" id="F4JEP5"/>
<dbReference type="OMA" id="CSVYFMP"/>
<dbReference type="OrthoDB" id="29596at2759"/>
<dbReference type="PRO" id="PR:F4JEP5"/>
<dbReference type="Proteomes" id="UP000006548">
    <property type="component" value="Chromosome 3"/>
</dbReference>
<dbReference type="ExpressionAtlas" id="F4JEP5">
    <property type="expression patterns" value="baseline and differential"/>
</dbReference>
<dbReference type="GO" id="GO:0000794">
    <property type="term" value="C:condensed nuclear chromosome"/>
    <property type="evidence" value="ECO:0000314"/>
    <property type="project" value="TAIR"/>
</dbReference>
<dbReference type="GO" id="GO:0005829">
    <property type="term" value="C:cytosol"/>
    <property type="evidence" value="ECO:0007005"/>
    <property type="project" value="TAIR"/>
</dbReference>
<dbReference type="GO" id="GO:0043073">
    <property type="term" value="C:germ cell nucleus"/>
    <property type="evidence" value="ECO:0000314"/>
    <property type="project" value="UniProtKB"/>
</dbReference>
<dbReference type="GO" id="GO:0005524">
    <property type="term" value="F:ATP binding"/>
    <property type="evidence" value="ECO:0007669"/>
    <property type="project" value="UniProtKB-KW"/>
</dbReference>
<dbReference type="GO" id="GO:0140664">
    <property type="term" value="F:ATP-dependent DNA damage sensor activity"/>
    <property type="evidence" value="ECO:0007669"/>
    <property type="project" value="InterPro"/>
</dbReference>
<dbReference type="GO" id="GO:0030983">
    <property type="term" value="F:mismatched DNA binding"/>
    <property type="evidence" value="ECO:0007669"/>
    <property type="project" value="InterPro"/>
</dbReference>
<dbReference type="GO" id="GO:0051026">
    <property type="term" value="P:chiasma assembly"/>
    <property type="evidence" value="ECO:0000315"/>
    <property type="project" value="TAIR"/>
</dbReference>
<dbReference type="GO" id="GO:0045143">
    <property type="term" value="P:homologous chromosome segregation"/>
    <property type="evidence" value="ECO:0000315"/>
    <property type="project" value="UniProtKB"/>
</dbReference>
<dbReference type="GO" id="GO:0010777">
    <property type="term" value="P:meiotic mismatch repair involved in reciprocal meiotic recombination"/>
    <property type="evidence" value="ECO:0000314"/>
    <property type="project" value="UniProtKB"/>
</dbReference>
<dbReference type="GO" id="GO:0007131">
    <property type="term" value="P:reciprocal meiotic recombination"/>
    <property type="evidence" value="ECO:0000315"/>
    <property type="project" value="TAIR"/>
</dbReference>
<dbReference type="CDD" id="cd03281">
    <property type="entry name" value="ABC_MSH5_euk"/>
    <property type="match status" value="1"/>
</dbReference>
<dbReference type="FunFam" id="1.10.1420.10:FF:000026">
    <property type="entry name" value="DNA mismatch repair protein MSH5"/>
    <property type="match status" value="1"/>
</dbReference>
<dbReference type="FunFam" id="3.40.50.300:FF:001067">
    <property type="entry name" value="DNA mismatch repair protein MSH5"/>
    <property type="match status" value="1"/>
</dbReference>
<dbReference type="Gene3D" id="1.10.1420.10">
    <property type="match status" value="1"/>
</dbReference>
<dbReference type="Gene3D" id="3.40.50.300">
    <property type="entry name" value="P-loop containing nucleotide triphosphate hydrolases"/>
    <property type="match status" value="1"/>
</dbReference>
<dbReference type="InterPro" id="IPR011184">
    <property type="entry name" value="DNA_mismatch_repair_Msh2"/>
</dbReference>
<dbReference type="InterPro" id="IPR000432">
    <property type="entry name" value="DNA_mismatch_repair_MutS_C"/>
</dbReference>
<dbReference type="InterPro" id="IPR007696">
    <property type="entry name" value="DNA_mismatch_repair_MutS_core"/>
</dbReference>
<dbReference type="InterPro" id="IPR036187">
    <property type="entry name" value="DNA_mismatch_repair_MutS_sf"/>
</dbReference>
<dbReference type="InterPro" id="IPR045076">
    <property type="entry name" value="MutS"/>
</dbReference>
<dbReference type="InterPro" id="IPR027417">
    <property type="entry name" value="P-loop_NTPase"/>
</dbReference>
<dbReference type="PANTHER" id="PTHR11361">
    <property type="entry name" value="DNA MISMATCH REPAIR PROTEIN MUTS FAMILY MEMBER"/>
    <property type="match status" value="1"/>
</dbReference>
<dbReference type="PANTHER" id="PTHR11361:SF20">
    <property type="entry name" value="MUTS PROTEIN HOMOLOG 5"/>
    <property type="match status" value="1"/>
</dbReference>
<dbReference type="Pfam" id="PF05192">
    <property type="entry name" value="MutS_III"/>
    <property type="match status" value="1"/>
</dbReference>
<dbReference type="Pfam" id="PF00488">
    <property type="entry name" value="MutS_V"/>
    <property type="match status" value="1"/>
</dbReference>
<dbReference type="PIRSF" id="PIRSF005813">
    <property type="entry name" value="MSH2"/>
    <property type="match status" value="1"/>
</dbReference>
<dbReference type="SMART" id="SM00534">
    <property type="entry name" value="MUTSac"/>
    <property type="match status" value="1"/>
</dbReference>
<dbReference type="SMART" id="SM00533">
    <property type="entry name" value="MUTSd"/>
    <property type="match status" value="1"/>
</dbReference>
<dbReference type="SUPFAM" id="SSF48334">
    <property type="entry name" value="DNA repair protein MutS, domain III"/>
    <property type="match status" value="1"/>
</dbReference>
<dbReference type="SUPFAM" id="SSF52540">
    <property type="entry name" value="P-loop containing nucleoside triphosphate hydrolases"/>
    <property type="match status" value="1"/>
</dbReference>
<dbReference type="PROSITE" id="PS00486">
    <property type="entry name" value="DNA_MISMATCH_REPAIR_2"/>
    <property type="match status" value="1"/>
</dbReference>